<sequence>MINDILKDAENRMKKSLEVLADDLAKIRTGRAHPDLLAHVTIDYYGVETPITQAANITVLDARTLGITPWEKGLSSKIEKAILTSDLGLNPTNLGDSLRVPMPALNEERRKELVKLVKSETEAGRVSIRNIRRDANGDIKELLKEKEITEDQAKKAEDDIQKITDKMIAQADALAAKKEQDLMAV</sequence>
<gene>
    <name evidence="1" type="primary">frr</name>
    <name type="ordered locus">FTA_0243</name>
</gene>
<evidence type="ECO:0000255" key="1">
    <source>
        <dbReference type="HAMAP-Rule" id="MF_00040"/>
    </source>
</evidence>
<protein>
    <recommendedName>
        <fullName evidence="1">Ribosome-recycling factor</fullName>
        <shortName evidence="1">RRF</shortName>
    </recommendedName>
    <alternativeName>
        <fullName evidence="1">Ribosome-releasing factor</fullName>
    </alternativeName>
</protein>
<accession>A7N9R7</accession>
<feature type="chain" id="PRO_1000003165" description="Ribosome-recycling factor">
    <location>
        <begin position="1"/>
        <end position="185"/>
    </location>
</feature>
<reference key="1">
    <citation type="journal article" date="2009" name="PLoS ONE">
        <title>Complete genome sequence of Francisella tularensis subspecies holarctica FTNF002-00.</title>
        <authorList>
            <person name="Barabote R.D."/>
            <person name="Xie G."/>
            <person name="Brettin T.S."/>
            <person name="Hinrichs S.H."/>
            <person name="Fey P.D."/>
            <person name="Jay J.J."/>
            <person name="Engle J.L."/>
            <person name="Godbole S.D."/>
            <person name="Noronha J.M."/>
            <person name="Scheuermann R.H."/>
            <person name="Zhou L.W."/>
            <person name="Lion C."/>
            <person name="Dempsey M.P."/>
        </authorList>
    </citation>
    <scope>NUCLEOTIDE SEQUENCE [LARGE SCALE GENOMIC DNA]</scope>
    <source>
        <strain>FTNF002-00 / FTA</strain>
    </source>
</reference>
<comment type="function">
    <text evidence="1">Responsible for the release of ribosomes from messenger RNA at the termination of protein biosynthesis. May increase the efficiency of translation by recycling ribosomes from one round of translation to another.</text>
</comment>
<comment type="subcellular location">
    <subcellularLocation>
        <location evidence="1">Cytoplasm</location>
    </subcellularLocation>
</comment>
<comment type="similarity">
    <text evidence="1">Belongs to the RRF family.</text>
</comment>
<organism>
    <name type="scientific">Francisella tularensis subsp. holarctica (strain FTNF002-00 / FTA)</name>
    <dbReference type="NCBI Taxonomy" id="458234"/>
    <lineage>
        <taxon>Bacteria</taxon>
        <taxon>Pseudomonadati</taxon>
        <taxon>Pseudomonadota</taxon>
        <taxon>Gammaproteobacteria</taxon>
        <taxon>Thiotrichales</taxon>
        <taxon>Francisellaceae</taxon>
        <taxon>Francisella</taxon>
    </lineage>
</organism>
<dbReference type="EMBL" id="CP000803">
    <property type="protein sequence ID" value="ABU60720.1"/>
    <property type="molecule type" value="Genomic_DNA"/>
</dbReference>
<dbReference type="RefSeq" id="WP_003014302.1">
    <property type="nucleotide sequence ID" value="NC_009749.1"/>
</dbReference>
<dbReference type="SMR" id="A7N9R7"/>
<dbReference type="GeneID" id="75264270"/>
<dbReference type="KEGG" id="fta:FTA_0243"/>
<dbReference type="HOGENOM" id="CLU_073981_2_0_6"/>
<dbReference type="GO" id="GO:0005829">
    <property type="term" value="C:cytosol"/>
    <property type="evidence" value="ECO:0007669"/>
    <property type="project" value="GOC"/>
</dbReference>
<dbReference type="GO" id="GO:0043023">
    <property type="term" value="F:ribosomal large subunit binding"/>
    <property type="evidence" value="ECO:0007669"/>
    <property type="project" value="TreeGrafter"/>
</dbReference>
<dbReference type="GO" id="GO:0002184">
    <property type="term" value="P:cytoplasmic translational termination"/>
    <property type="evidence" value="ECO:0007669"/>
    <property type="project" value="TreeGrafter"/>
</dbReference>
<dbReference type="CDD" id="cd00520">
    <property type="entry name" value="RRF"/>
    <property type="match status" value="1"/>
</dbReference>
<dbReference type="FunFam" id="1.10.132.20:FF:000001">
    <property type="entry name" value="Ribosome-recycling factor"/>
    <property type="match status" value="1"/>
</dbReference>
<dbReference type="FunFam" id="3.30.1360.40:FF:000001">
    <property type="entry name" value="Ribosome-recycling factor"/>
    <property type="match status" value="1"/>
</dbReference>
<dbReference type="Gene3D" id="3.30.1360.40">
    <property type="match status" value="1"/>
</dbReference>
<dbReference type="Gene3D" id="1.10.132.20">
    <property type="entry name" value="Ribosome-recycling factor"/>
    <property type="match status" value="1"/>
</dbReference>
<dbReference type="HAMAP" id="MF_00040">
    <property type="entry name" value="RRF"/>
    <property type="match status" value="1"/>
</dbReference>
<dbReference type="InterPro" id="IPR002661">
    <property type="entry name" value="Ribosome_recyc_fac"/>
</dbReference>
<dbReference type="InterPro" id="IPR023584">
    <property type="entry name" value="Ribosome_recyc_fac_dom"/>
</dbReference>
<dbReference type="InterPro" id="IPR036191">
    <property type="entry name" value="RRF_sf"/>
</dbReference>
<dbReference type="NCBIfam" id="TIGR00496">
    <property type="entry name" value="frr"/>
    <property type="match status" value="1"/>
</dbReference>
<dbReference type="PANTHER" id="PTHR20982:SF3">
    <property type="entry name" value="MITOCHONDRIAL RIBOSOME RECYCLING FACTOR PSEUDO 1"/>
    <property type="match status" value="1"/>
</dbReference>
<dbReference type="PANTHER" id="PTHR20982">
    <property type="entry name" value="RIBOSOME RECYCLING FACTOR"/>
    <property type="match status" value="1"/>
</dbReference>
<dbReference type="Pfam" id="PF01765">
    <property type="entry name" value="RRF"/>
    <property type="match status" value="1"/>
</dbReference>
<dbReference type="SUPFAM" id="SSF55194">
    <property type="entry name" value="Ribosome recycling factor, RRF"/>
    <property type="match status" value="1"/>
</dbReference>
<proteinExistence type="inferred from homology"/>
<name>RRF_FRATF</name>
<keyword id="KW-0963">Cytoplasm</keyword>
<keyword id="KW-0648">Protein biosynthesis</keyword>